<proteinExistence type="inferred from homology"/>
<feature type="chain" id="PRO_0000266889" description="Probable GTP-binding protein EngB">
    <location>
        <begin position="1"/>
        <end position="198"/>
    </location>
</feature>
<feature type="domain" description="EngB-type G" evidence="1">
    <location>
        <begin position="21"/>
        <end position="195"/>
    </location>
</feature>
<feature type="binding site" evidence="1">
    <location>
        <begin position="29"/>
        <end position="36"/>
    </location>
    <ligand>
        <name>GTP</name>
        <dbReference type="ChEBI" id="CHEBI:37565"/>
    </ligand>
</feature>
<feature type="binding site" evidence="1">
    <location>
        <position position="36"/>
    </location>
    <ligand>
        <name>Mg(2+)</name>
        <dbReference type="ChEBI" id="CHEBI:18420"/>
    </ligand>
</feature>
<feature type="binding site" evidence="1">
    <location>
        <begin position="56"/>
        <end position="60"/>
    </location>
    <ligand>
        <name>GTP</name>
        <dbReference type="ChEBI" id="CHEBI:37565"/>
    </ligand>
</feature>
<feature type="binding site" evidence="1">
    <location>
        <position position="58"/>
    </location>
    <ligand>
        <name>Mg(2+)</name>
        <dbReference type="ChEBI" id="CHEBI:18420"/>
    </ligand>
</feature>
<feature type="binding site" evidence="1">
    <location>
        <begin position="75"/>
        <end position="78"/>
    </location>
    <ligand>
        <name>GTP</name>
        <dbReference type="ChEBI" id="CHEBI:37565"/>
    </ligand>
</feature>
<feature type="binding site" evidence="1">
    <location>
        <begin position="142"/>
        <end position="145"/>
    </location>
    <ligand>
        <name>GTP</name>
        <dbReference type="ChEBI" id="CHEBI:37565"/>
    </ligand>
</feature>
<feature type="binding site" evidence="1">
    <location>
        <begin position="174"/>
        <end position="176"/>
    </location>
    <ligand>
        <name>GTP</name>
        <dbReference type="ChEBI" id="CHEBI:37565"/>
    </ligand>
</feature>
<dbReference type="EMBL" id="AE017263">
    <property type="protein sequence ID" value="AAT75714.1"/>
    <property type="molecule type" value="Genomic_DNA"/>
</dbReference>
<dbReference type="RefSeq" id="WP_011183254.1">
    <property type="nucleotide sequence ID" value="NC_006055.1"/>
</dbReference>
<dbReference type="RefSeq" id="YP_053598.1">
    <property type="nucleotide sequence ID" value="NC_006055.1"/>
</dbReference>
<dbReference type="SMR" id="Q6F1A9"/>
<dbReference type="STRING" id="265311.Mfl357"/>
<dbReference type="PaxDb" id="265311-Mfl357"/>
<dbReference type="EnsemblBacteria" id="AAT75714">
    <property type="protein sequence ID" value="AAT75714"/>
    <property type="gene ID" value="Mfl357"/>
</dbReference>
<dbReference type="GeneID" id="2897793"/>
<dbReference type="KEGG" id="mfl:Mfl357"/>
<dbReference type="PATRIC" id="fig|265311.5.peg.355"/>
<dbReference type="eggNOG" id="COG0218">
    <property type="taxonomic scope" value="Bacteria"/>
</dbReference>
<dbReference type="HOGENOM" id="CLU_033732_1_0_14"/>
<dbReference type="OrthoDB" id="9804921at2"/>
<dbReference type="Proteomes" id="UP000006647">
    <property type="component" value="Chromosome"/>
</dbReference>
<dbReference type="GO" id="GO:0005829">
    <property type="term" value="C:cytosol"/>
    <property type="evidence" value="ECO:0007669"/>
    <property type="project" value="TreeGrafter"/>
</dbReference>
<dbReference type="GO" id="GO:0005525">
    <property type="term" value="F:GTP binding"/>
    <property type="evidence" value="ECO:0007669"/>
    <property type="project" value="UniProtKB-UniRule"/>
</dbReference>
<dbReference type="GO" id="GO:0046872">
    <property type="term" value="F:metal ion binding"/>
    <property type="evidence" value="ECO:0007669"/>
    <property type="project" value="UniProtKB-KW"/>
</dbReference>
<dbReference type="GO" id="GO:0000917">
    <property type="term" value="P:division septum assembly"/>
    <property type="evidence" value="ECO:0007669"/>
    <property type="project" value="UniProtKB-KW"/>
</dbReference>
<dbReference type="CDD" id="cd01876">
    <property type="entry name" value="YihA_EngB"/>
    <property type="match status" value="1"/>
</dbReference>
<dbReference type="FunFam" id="3.40.50.300:FF:000098">
    <property type="entry name" value="Probable GTP-binding protein EngB"/>
    <property type="match status" value="1"/>
</dbReference>
<dbReference type="Gene3D" id="3.40.50.300">
    <property type="entry name" value="P-loop containing nucleotide triphosphate hydrolases"/>
    <property type="match status" value="1"/>
</dbReference>
<dbReference type="HAMAP" id="MF_00321">
    <property type="entry name" value="GTPase_EngB"/>
    <property type="match status" value="1"/>
</dbReference>
<dbReference type="InterPro" id="IPR030393">
    <property type="entry name" value="G_ENGB_dom"/>
</dbReference>
<dbReference type="InterPro" id="IPR006073">
    <property type="entry name" value="GTP-bd"/>
</dbReference>
<dbReference type="InterPro" id="IPR019987">
    <property type="entry name" value="GTP-bd_ribosome_bio_YsxC"/>
</dbReference>
<dbReference type="InterPro" id="IPR027417">
    <property type="entry name" value="P-loop_NTPase"/>
</dbReference>
<dbReference type="InterPro" id="IPR005225">
    <property type="entry name" value="Small_GTP-bd"/>
</dbReference>
<dbReference type="NCBIfam" id="TIGR03598">
    <property type="entry name" value="GTPase_YsxC"/>
    <property type="match status" value="1"/>
</dbReference>
<dbReference type="NCBIfam" id="TIGR00231">
    <property type="entry name" value="small_GTP"/>
    <property type="match status" value="1"/>
</dbReference>
<dbReference type="PANTHER" id="PTHR11649:SF13">
    <property type="entry name" value="ENGB-TYPE G DOMAIN-CONTAINING PROTEIN"/>
    <property type="match status" value="1"/>
</dbReference>
<dbReference type="PANTHER" id="PTHR11649">
    <property type="entry name" value="MSS1/TRME-RELATED GTP-BINDING PROTEIN"/>
    <property type="match status" value="1"/>
</dbReference>
<dbReference type="Pfam" id="PF01926">
    <property type="entry name" value="MMR_HSR1"/>
    <property type="match status" value="1"/>
</dbReference>
<dbReference type="PRINTS" id="PR00449">
    <property type="entry name" value="RASTRNSFRMNG"/>
</dbReference>
<dbReference type="SUPFAM" id="SSF52540">
    <property type="entry name" value="P-loop containing nucleoside triphosphate hydrolases"/>
    <property type="match status" value="1"/>
</dbReference>
<dbReference type="PROSITE" id="PS51706">
    <property type="entry name" value="G_ENGB"/>
    <property type="match status" value="1"/>
</dbReference>
<reference key="1">
    <citation type="submission" date="2004-06" db="EMBL/GenBank/DDBJ databases">
        <authorList>
            <person name="Birren B.W."/>
            <person name="Stange-Thomann N."/>
            <person name="Hafez N."/>
            <person name="DeCaprio D."/>
            <person name="Fisher S."/>
            <person name="Butler J."/>
            <person name="Elkins T."/>
            <person name="Kodira C.D."/>
            <person name="Major J."/>
            <person name="Wang S."/>
            <person name="Nicol R."/>
            <person name="Nusbaum C."/>
        </authorList>
    </citation>
    <scope>NUCLEOTIDE SEQUENCE [LARGE SCALE GENOMIC DNA]</scope>
    <source>
        <strain>ATCC 33453 / NBRC 100688 / NCTC 11704 / L1</strain>
    </source>
</reference>
<sequence length="198" mass="22539">MFKQSVFIKSAANKSGWIEDNIPEVCFVGRSNVGKSSFINTLANNKKLAKVANTPGKTRLLNFFDINNSSFRLVDAPGYGYAKISNSMKVEFGIMMEDYLTTRENLKLVCMLVDLRHKPTNDDVQMYDFLKANDIPVLMIGTKLDKLKRNEIAKNEKLIKETLEFDQNDVFVKVSNLDKINIKESYDALIRLLEVENG</sequence>
<name>ENGB_MESFL</name>
<protein>
    <recommendedName>
        <fullName evidence="1">Probable GTP-binding protein EngB</fullName>
    </recommendedName>
</protein>
<keyword id="KW-0131">Cell cycle</keyword>
<keyword id="KW-0132">Cell division</keyword>
<keyword id="KW-0342">GTP-binding</keyword>
<keyword id="KW-0460">Magnesium</keyword>
<keyword id="KW-0479">Metal-binding</keyword>
<keyword id="KW-0547">Nucleotide-binding</keyword>
<keyword id="KW-1185">Reference proteome</keyword>
<keyword id="KW-0717">Septation</keyword>
<gene>
    <name evidence="1" type="primary">engB</name>
    <name type="ordered locus">Mfl357</name>
</gene>
<organism>
    <name type="scientific">Mesoplasma florum (strain ATCC 33453 / NBRC 100688 / NCTC 11704 / L1)</name>
    <name type="common">Acholeplasma florum</name>
    <dbReference type="NCBI Taxonomy" id="265311"/>
    <lineage>
        <taxon>Bacteria</taxon>
        <taxon>Bacillati</taxon>
        <taxon>Mycoplasmatota</taxon>
        <taxon>Mollicutes</taxon>
        <taxon>Entomoplasmatales</taxon>
        <taxon>Entomoplasmataceae</taxon>
        <taxon>Mesoplasma</taxon>
    </lineage>
</organism>
<comment type="function">
    <text evidence="1">Necessary for normal cell division and for the maintenance of normal septation.</text>
</comment>
<comment type="cofactor">
    <cofactor evidence="1">
        <name>Mg(2+)</name>
        <dbReference type="ChEBI" id="CHEBI:18420"/>
    </cofactor>
</comment>
<comment type="similarity">
    <text evidence="1">Belongs to the TRAFAC class TrmE-Era-EngA-EngB-Septin-like GTPase superfamily. EngB GTPase family.</text>
</comment>
<accession>Q6F1A9</accession>
<evidence type="ECO:0000255" key="1">
    <source>
        <dbReference type="HAMAP-Rule" id="MF_00321"/>
    </source>
</evidence>